<proteinExistence type="inferred from homology"/>
<feature type="chain" id="PRO_1000077765" description="UvrABC system protein C">
    <location>
        <begin position="1"/>
        <end position="600"/>
    </location>
</feature>
<feature type="domain" description="GIY-YIG" evidence="1">
    <location>
        <begin position="15"/>
        <end position="100"/>
    </location>
</feature>
<feature type="domain" description="UVR" evidence="1">
    <location>
        <begin position="203"/>
        <end position="238"/>
    </location>
</feature>
<keyword id="KW-0963">Cytoplasm</keyword>
<keyword id="KW-0227">DNA damage</keyword>
<keyword id="KW-0228">DNA excision</keyword>
<keyword id="KW-0234">DNA repair</keyword>
<keyword id="KW-0267">Excision nuclease</keyword>
<keyword id="KW-0742">SOS response</keyword>
<protein>
    <recommendedName>
        <fullName evidence="1">UvrABC system protein C</fullName>
        <shortName evidence="1">Protein UvrC</shortName>
    </recommendedName>
    <alternativeName>
        <fullName evidence="1">Excinuclease ABC subunit C</fullName>
    </alternativeName>
</protein>
<name>UVRC_CAMJ8</name>
<sequence length="600" mass="69717">MTKENLENELKTLPNSAGVYQYFNQEGKLLYVGKAKNLKNRVKSYFAFTPNLHANPRNSLRIQKMIEETVHLEFITTNSEADALILENSFIKQLHPKYNILLRDDKTYPYIYVDFEEEFPRFEITRKLVKKSKIKYFGPFFKGARELLDALYLYYPLKQKASCKSPCIFYQISRCLAPCDKRISREKYLEILDEAMHALLNPSILIKNLEKQMLVLAQNENYEEAAKVRDQIVTIKDLEVKVEIDIAKLEDFEVFALAFENSMLSTLRFVVQNGKIISVNSKITPIKNDIQWDKNEIYKQLILENFSMDIPLLANVIYVYEEFEDRMLLEEILSQRFDKKISIKIPKIGEKRRICDLAFQNALLNIEKEQKNHDFTIQKELKSYFELENLPNDIEIFDNSHLQGVANVGAMVTYSANSWDKSKYRKFHLKHKNDYDQMREVLMRRALDFDKIPPPDLWLIDGGKALLDLAKEIIVSSGANVDILAISKEKIDAKAHRAKGGARDKIHSLKGEFSLSINDKKLQFLQKLRDEAHRFAISFHQNTKKKQDLNSSKLVNLGLSSGVIQKLLAYYGNFESIYKADFKDLAMLVGKKVAQKIKEN</sequence>
<organism>
    <name type="scientific">Campylobacter jejuni subsp. jejuni serotype O:6 (strain 81116 / NCTC 11828)</name>
    <dbReference type="NCBI Taxonomy" id="407148"/>
    <lineage>
        <taxon>Bacteria</taxon>
        <taxon>Pseudomonadati</taxon>
        <taxon>Campylobacterota</taxon>
        <taxon>Epsilonproteobacteria</taxon>
        <taxon>Campylobacterales</taxon>
        <taxon>Campylobacteraceae</taxon>
        <taxon>Campylobacter</taxon>
    </lineage>
</organism>
<dbReference type="EMBL" id="CP000814">
    <property type="protein sequence ID" value="ABV52788.1"/>
    <property type="molecule type" value="Genomic_DNA"/>
</dbReference>
<dbReference type="RefSeq" id="WP_012006742.1">
    <property type="nucleotide sequence ID" value="NC_009839.1"/>
</dbReference>
<dbReference type="SMR" id="A8FMV1"/>
<dbReference type="KEGG" id="cju:C8J_1189"/>
<dbReference type="HOGENOM" id="CLU_014841_3_2_7"/>
<dbReference type="GO" id="GO:0005737">
    <property type="term" value="C:cytoplasm"/>
    <property type="evidence" value="ECO:0007669"/>
    <property type="project" value="UniProtKB-SubCell"/>
</dbReference>
<dbReference type="GO" id="GO:0009380">
    <property type="term" value="C:excinuclease repair complex"/>
    <property type="evidence" value="ECO:0007669"/>
    <property type="project" value="InterPro"/>
</dbReference>
<dbReference type="GO" id="GO:0003677">
    <property type="term" value="F:DNA binding"/>
    <property type="evidence" value="ECO:0007669"/>
    <property type="project" value="UniProtKB-UniRule"/>
</dbReference>
<dbReference type="GO" id="GO:0009381">
    <property type="term" value="F:excinuclease ABC activity"/>
    <property type="evidence" value="ECO:0007669"/>
    <property type="project" value="UniProtKB-UniRule"/>
</dbReference>
<dbReference type="GO" id="GO:0006289">
    <property type="term" value="P:nucleotide-excision repair"/>
    <property type="evidence" value="ECO:0007669"/>
    <property type="project" value="UniProtKB-UniRule"/>
</dbReference>
<dbReference type="GO" id="GO:0009432">
    <property type="term" value="P:SOS response"/>
    <property type="evidence" value="ECO:0007669"/>
    <property type="project" value="UniProtKB-UniRule"/>
</dbReference>
<dbReference type="CDD" id="cd10434">
    <property type="entry name" value="GIY-YIG_UvrC_Cho"/>
    <property type="match status" value="1"/>
</dbReference>
<dbReference type="FunFam" id="3.40.1440.10:FF:000001">
    <property type="entry name" value="UvrABC system protein C"/>
    <property type="match status" value="1"/>
</dbReference>
<dbReference type="Gene3D" id="3.40.1440.10">
    <property type="entry name" value="GIY-YIG endonuclease"/>
    <property type="match status" value="1"/>
</dbReference>
<dbReference type="Gene3D" id="4.10.860.10">
    <property type="entry name" value="UVR domain"/>
    <property type="match status" value="1"/>
</dbReference>
<dbReference type="Gene3D" id="3.30.420.340">
    <property type="entry name" value="UvrC, RNAse H endonuclease domain"/>
    <property type="match status" value="1"/>
</dbReference>
<dbReference type="HAMAP" id="MF_00203">
    <property type="entry name" value="UvrC"/>
    <property type="match status" value="1"/>
</dbReference>
<dbReference type="InterPro" id="IPR000305">
    <property type="entry name" value="GIY-YIG_endonuc"/>
</dbReference>
<dbReference type="InterPro" id="IPR035901">
    <property type="entry name" value="GIY-YIG_endonuc_sf"/>
</dbReference>
<dbReference type="InterPro" id="IPR047296">
    <property type="entry name" value="GIY-YIG_UvrC_Cho"/>
</dbReference>
<dbReference type="InterPro" id="IPR010994">
    <property type="entry name" value="RuvA_2-like"/>
</dbReference>
<dbReference type="InterPro" id="IPR001943">
    <property type="entry name" value="UVR_dom"/>
</dbReference>
<dbReference type="InterPro" id="IPR036876">
    <property type="entry name" value="UVR_dom_sf"/>
</dbReference>
<dbReference type="InterPro" id="IPR050066">
    <property type="entry name" value="UvrABC_protein_C"/>
</dbReference>
<dbReference type="InterPro" id="IPR004791">
    <property type="entry name" value="UvrC"/>
</dbReference>
<dbReference type="InterPro" id="IPR001162">
    <property type="entry name" value="UvrC_RNase_H_dom"/>
</dbReference>
<dbReference type="InterPro" id="IPR038476">
    <property type="entry name" value="UvrC_RNase_H_dom_sf"/>
</dbReference>
<dbReference type="NCBIfam" id="TIGR00194">
    <property type="entry name" value="uvrC"/>
    <property type="match status" value="1"/>
</dbReference>
<dbReference type="PANTHER" id="PTHR30562:SF1">
    <property type="entry name" value="UVRABC SYSTEM PROTEIN C"/>
    <property type="match status" value="1"/>
</dbReference>
<dbReference type="PANTHER" id="PTHR30562">
    <property type="entry name" value="UVRC/OXIDOREDUCTASE"/>
    <property type="match status" value="1"/>
</dbReference>
<dbReference type="Pfam" id="PF01541">
    <property type="entry name" value="GIY-YIG"/>
    <property type="match status" value="1"/>
</dbReference>
<dbReference type="Pfam" id="PF02151">
    <property type="entry name" value="UVR"/>
    <property type="match status" value="1"/>
</dbReference>
<dbReference type="Pfam" id="PF22920">
    <property type="entry name" value="UvrC_RNaseH"/>
    <property type="match status" value="1"/>
</dbReference>
<dbReference type="Pfam" id="PF08459">
    <property type="entry name" value="UvrC_RNaseH_dom"/>
    <property type="match status" value="1"/>
</dbReference>
<dbReference type="SMART" id="SM00465">
    <property type="entry name" value="GIYc"/>
    <property type="match status" value="1"/>
</dbReference>
<dbReference type="SUPFAM" id="SSF46600">
    <property type="entry name" value="C-terminal UvrC-binding domain of UvrB"/>
    <property type="match status" value="1"/>
</dbReference>
<dbReference type="SUPFAM" id="SSF82771">
    <property type="entry name" value="GIY-YIG endonuclease"/>
    <property type="match status" value="1"/>
</dbReference>
<dbReference type="SUPFAM" id="SSF47781">
    <property type="entry name" value="RuvA domain 2-like"/>
    <property type="match status" value="1"/>
</dbReference>
<dbReference type="PROSITE" id="PS50164">
    <property type="entry name" value="GIY_YIG"/>
    <property type="match status" value="1"/>
</dbReference>
<dbReference type="PROSITE" id="PS50151">
    <property type="entry name" value="UVR"/>
    <property type="match status" value="1"/>
</dbReference>
<dbReference type="PROSITE" id="PS50165">
    <property type="entry name" value="UVRC"/>
    <property type="match status" value="1"/>
</dbReference>
<comment type="function">
    <text evidence="1">The UvrABC repair system catalyzes the recognition and processing of DNA lesions. UvrC both incises the 5' and 3' sides of the lesion. The N-terminal half is responsible for the 3' incision and the C-terminal half is responsible for the 5' incision.</text>
</comment>
<comment type="subunit">
    <text evidence="1">Interacts with UvrB in an incision complex.</text>
</comment>
<comment type="subcellular location">
    <subcellularLocation>
        <location evidence="1">Cytoplasm</location>
    </subcellularLocation>
</comment>
<comment type="similarity">
    <text evidence="1">Belongs to the UvrC family.</text>
</comment>
<accession>A8FMV1</accession>
<gene>
    <name evidence="1" type="primary">uvrC</name>
    <name type="ordered locus">C8J_1189</name>
</gene>
<evidence type="ECO:0000255" key="1">
    <source>
        <dbReference type="HAMAP-Rule" id="MF_00203"/>
    </source>
</evidence>
<reference key="1">
    <citation type="journal article" date="2007" name="J. Bacteriol.">
        <title>The complete genome sequence of Campylobacter jejuni strain 81116 (NCTC11828).</title>
        <authorList>
            <person name="Pearson B.M."/>
            <person name="Gaskin D.J.H."/>
            <person name="Segers R.P.A.M."/>
            <person name="Wells J.M."/>
            <person name="Nuijten P.J.M."/>
            <person name="van Vliet A.H.M."/>
        </authorList>
    </citation>
    <scope>NUCLEOTIDE SEQUENCE [LARGE SCALE GENOMIC DNA]</scope>
    <source>
        <strain>81116 / NCTC 11828</strain>
    </source>
</reference>